<proteinExistence type="evidence at protein level"/>
<comment type="function">
    <text>Transfers electrons from cytochrome c551 to cytochrome oxidase.</text>
</comment>
<comment type="interaction">
    <interactant intactId="EBI-8599567">
        <id>P00282</id>
    </interactant>
    <interactant intactId="EBI-8599567">
        <id>P00282</id>
        <label>azu</label>
    </interactant>
    <organismsDiffer>false</organismsDiffer>
    <experiments>2</experiments>
</comment>
<comment type="interaction">
    <interactant intactId="EBI-8599567">
        <id>P00282</id>
    </interactant>
    <interactant intactId="EBI-26358478">
        <id>G3XD89</id>
        <label>oprC</label>
    </interactant>
    <organismsDiffer>false</organismsDiffer>
    <experiments>3</experiments>
</comment>
<comment type="subcellular location">
    <subcellularLocation>
        <location>Periplasm</location>
    </subcellularLocation>
</comment>
<name>AZUR_PSEAE</name>
<keyword id="KW-0002">3D-structure</keyword>
<keyword id="KW-0186">Copper</keyword>
<keyword id="KW-0903">Direct protein sequencing</keyword>
<keyword id="KW-1015">Disulfide bond</keyword>
<keyword id="KW-0249">Electron transport</keyword>
<keyword id="KW-0479">Metal-binding</keyword>
<keyword id="KW-0574">Periplasm</keyword>
<keyword id="KW-1185">Reference proteome</keyword>
<keyword id="KW-0732">Signal</keyword>
<keyword id="KW-0813">Transport</keyword>
<protein>
    <recommendedName>
        <fullName>Azurin</fullName>
    </recommendedName>
</protein>
<evidence type="ECO:0000269" key="1">
    <source>
    </source>
</evidence>
<evidence type="ECO:0000269" key="2">
    <source ref="5"/>
</evidence>
<evidence type="ECO:0000269" key="3">
    <source ref="6"/>
</evidence>
<evidence type="ECO:0007829" key="4">
    <source>
        <dbReference type="PDB" id="1JZJ"/>
    </source>
</evidence>
<evidence type="ECO:0007829" key="5">
    <source>
        <dbReference type="PDB" id="2FT6"/>
    </source>
</evidence>
<evidence type="ECO:0007829" key="6">
    <source>
        <dbReference type="PDB" id="2XV0"/>
    </source>
</evidence>
<evidence type="ECO:0007829" key="7">
    <source>
        <dbReference type="PDB" id="3AZU"/>
    </source>
</evidence>
<evidence type="ECO:0007829" key="8">
    <source>
        <dbReference type="PDB" id="3FSA"/>
    </source>
</evidence>
<evidence type="ECO:0007829" key="9">
    <source>
        <dbReference type="PDB" id="4MFH"/>
    </source>
</evidence>
<evidence type="ECO:0007829" key="10">
    <source>
        <dbReference type="PDB" id="8F5L"/>
    </source>
</evidence>
<sequence>MLRKLAAVSLLSLLSAPLLAAECSVDIQGNDQMQFNTNAITVDKSCKQFTVNLSHPGNLPKNVMGHNWVLSTAADMQGVVTDGMASGLDKDYLKPDDSRVIAHTKLIGSGEKDSVTFDVSKLKEGEQYMFFCTFPGHSALMKGTLTLK</sequence>
<organism>
    <name type="scientific">Pseudomonas aeruginosa (strain ATCC 15692 / DSM 22644 / CIP 104116 / JCM 14847 / LMG 12228 / 1C / PRS 101 / PAO1)</name>
    <dbReference type="NCBI Taxonomy" id="208964"/>
    <lineage>
        <taxon>Bacteria</taxon>
        <taxon>Pseudomonadati</taxon>
        <taxon>Pseudomonadota</taxon>
        <taxon>Gammaproteobacteria</taxon>
        <taxon>Pseudomonadales</taxon>
        <taxon>Pseudomonadaceae</taxon>
        <taxon>Pseudomonas</taxon>
    </lineage>
</organism>
<reference key="1">
    <citation type="journal article" date="1989" name="Eur. J. Biochem.">
        <title>The azurin gene from Pseudomonas aeruginosa. Cloning and characterization.</title>
        <authorList>
            <person name="Arvidsson R.H.A."/>
            <person name="Nordling M."/>
            <person name="Lundberg L.G."/>
        </authorList>
    </citation>
    <scope>NUCLEOTIDE SEQUENCE [GENOMIC DNA]</scope>
    <source>
        <strain>ATCC 10145 / DSM 50071 / JCM 5962 / LMG 1242 / NBRC 12689 / NCIMB 8295 / NRRL B-771</strain>
    </source>
</reference>
<reference key="2">
    <citation type="journal article" date="1990" name="Gene">
        <title>Isolation and sequencing of the Alcaligenes denitrificans azurin-encoding gene: comparison with the genes encoding blue copper proteins from Pseudomonas aeruginosa and Alcaligenes faecalis.</title>
        <authorList>
            <person name="Hoitink C.W.G."/>
            <person name="Woudt L.P."/>
            <person name="Turenhout J.C.M."/>
            <person name="van de Kamp M."/>
            <person name="Canters G.W."/>
        </authorList>
    </citation>
    <scope>NUCLEOTIDE SEQUENCE [GENOMIC DNA]</scope>
</reference>
<reference key="3">
    <citation type="journal article" date="1987" name="FEBS Lett.">
        <title>The azurin gene from Pseudomonas aeruginosa codes for a pre-protein with a signal peptide. Cloning and sequencing of the azurin gene.</title>
        <authorList>
            <person name="Canters G.W."/>
        </authorList>
    </citation>
    <scope>NUCLEOTIDE SEQUENCE [GENOMIC DNA]</scope>
</reference>
<reference key="4">
    <citation type="journal article" date="2000" name="Nature">
        <title>Complete genome sequence of Pseudomonas aeruginosa PAO1, an opportunistic pathogen.</title>
        <authorList>
            <person name="Stover C.K."/>
            <person name="Pham X.-Q.T."/>
            <person name="Erwin A.L."/>
            <person name="Mizoguchi S.D."/>
            <person name="Warrener P."/>
            <person name="Hickey M.J."/>
            <person name="Brinkman F.S.L."/>
            <person name="Hufnagle W.O."/>
            <person name="Kowalik D.J."/>
            <person name="Lagrou M."/>
            <person name="Garber R.L."/>
            <person name="Goltry L."/>
            <person name="Tolentino E."/>
            <person name="Westbrock-Wadman S."/>
            <person name="Yuan Y."/>
            <person name="Brody L.L."/>
            <person name="Coulter S.N."/>
            <person name="Folger K.R."/>
            <person name="Kas A."/>
            <person name="Larbig K."/>
            <person name="Lim R.M."/>
            <person name="Smith K.A."/>
            <person name="Spencer D.H."/>
            <person name="Wong G.K.-S."/>
            <person name="Wu Z."/>
            <person name="Paulsen I.T."/>
            <person name="Reizer J."/>
            <person name="Saier M.H. Jr."/>
            <person name="Hancock R.E.W."/>
            <person name="Lory S."/>
            <person name="Olson M.V."/>
        </authorList>
    </citation>
    <scope>NUCLEOTIDE SEQUENCE [LARGE SCALE GENOMIC DNA]</scope>
    <source>
        <strain>ATCC 15692 / DSM 22644 / CIP 104116 / JCM 14847 / LMG 12228 / 1C / PRS 101 / PAO1</strain>
    </source>
</reference>
<reference key="5">
    <citation type="book" date="1971" name="Developpements recents dans l'etude chimique de la structure des proteines">
        <editorList>
            <person name="Preverio A."/>
            <person name="Pechere J.-F."/>
            <person name="Coletti-preverio M.-A."/>
        </editorList>
        <authorList>
            <person name="Ambler R.P."/>
        </authorList>
    </citation>
    <scope>PROTEIN SEQUENCE OF 21-148</scope>
    <source>
        <strain>P6009</strain>
    </source>
</reference>
<reference key="6">
    <citation type="submission" date="1996-04" db="UniProtKB">
        <authorList>
            <person name="Charnock C."/>
        </authorList>
    </citation>
    <scope>PROTEIN SEQUENCE OF 21-41</scope>
    <source>
        <strain>ATCC 33352 / IATS 05</strain>
    </source>
</reference>
<reference key="7">
    <citation type="journal article" date="1978" name="J. Mol. Biol.">
        <title>A crystallographic model for azurin at 3-A resolution.</title>
        <authorList>
            <person name="Adman E.T."/>
            <person name="Stenkamp R.E."/>
            <person name="Sieker L.C."/>
            <person name="Jensen L.H."/>
        </authorList>
    </citation>
    <scope>X-RAY CRYSTALLOGRAPHY (3 ANGSTROMS)</scope>
</reference>
<reference key="8">
    <citation type="journal article" date="1981" name="Isr. J. Chem.">
        <title>Structural features of azurin at 2.7-A resolution.</title>
        <authorList>
            <person name="Adman E.T."/>
            <person name="Jensen L.H."/>
        </authorList>
    </citation>
    <scope>X-RAY CRYSTALLOGRAPHY (2.7 ANGSTROMS)</scope>
</reference>
<reference key="9">
    <citation type="journal article" date="1992" name="FEBS Lett.">
        <title>Crystal structure of Pseudomonas aeruginosa apo-azurin at 1.85-A resolution.</title>
        <authorList>
            <person name="Nar H."/>
            <person name="Messerschmidt A."/>
            <person name="Huber R."/>
            <person name="van de Kamp M."/>
            <person name="Canters G.W."/>
        </authorList>
    </citation>
    <scope>X-RAY CRYSTALLOGRAPHY (1.85 ANGSTROMS)</scope>
</reference>
<reference key="10">
    <citation type="journal article" date="1996" name="J. Mol. Biol.">
        <title>X-ray crystal structure of the two site-specific mutants Ile7Ser and Phe110Ser of azurin from Pseudomonas aeruginosa.</title>
        <authorList>
            <person name="Hammann C."/>
            <person name="Messerschmidt A."/>
            <person name="Huber R."/>
            <person name="Nar H."/>
            <person name="Gilardi G."/>
            <person name="Canters G.W."/>
        </authorList>
    </citation>
    <scope>X-RAY CRYSTALLOGRAPHY (2.3 ANGSTROMS) OF MUTANTS SER-27 AND SER-130</scope>
</reference>
<reference key="11">
    <citation type="journal article" date="1997" name="J. Mol. Biol.">
        <title>Crystal structures of modified apo-His117Gly and apo-His46Gly mutants of Pseudomonas aeruginosa azurin.</title>
        <authorList>
            <person name="Hammann C."/>
            <person name="van Pouderoyen G."/>
            <person name="Nar H."/>
            <person name="Rueth F.-X.G."/>
            <person name="Messerschmidt A."/>
            <person name="Huber R."/>
            <person name="den Blaauwen T."/>
            <person name="Canters G.W."/>
        </authorList>
    </citation>
    <scope>X-RAY CRYSTALLOGRAPHY (2.4 ANGSTROMS) OF MUTANT HIS-137</scope>
</reference>
<reference key="12">
    <citation type="journal article" date="1997" name="Biochemistry">
        <title>X-ray structure determination and characterization of the Pseudomonas aeruginosa azurin mutant Met121Glu.</title>
        <authorList>
            <person name="Karlsson B.G."/>
            <person name="Tsai L.-C."/>
            <person name="Nar H."/>
            <person name="Sanders-Loehr J."/>
            <person name="Bonander N."/>
            <person name="Langer V."/>
            <person name="Sjoelin L."/>
        </authorList>
    </citation>
    <scope>X-RAY CRYSTALLOGRAPHY (2.3 ANGSTROMS) OF MUTANT GLU-141</scope>
</reference>
<reference key="13">
    <citation type="journal article" date="1992" name="Biochemistry">
        <title>Complete sequential 1H and 15N nuclear magnetic resonance assignments and solution secondary structure of the blue copper protein azurin from Pseudomonas aeruginosa.</title>
        <authorList>
            <person name="van de Kamp M."/>
            <person name="Canters G.W."/>
            <person name="Wijmenga S.S."/>
            <person name="Lommen A."/>
            <person name="Hilbers C.W."/>
            <person name="Nar H."/>
            <person name="Messerschmidt A."/>
            <person name="Huber R."/>
        </authorList>
    </citation>
    <scope>STRUCTURE BY NMR</scope>
</reference>
<accession>P00282</accession>
<feature type="signal peptide" evidence="2 3">
    <location>
        <begin position="1"/>
        <end position="20"/>
    </location>
</feature>
<feature type="chain" id="PRO_0000002863" description="Azurin">
    <location>
        <begin position="21"/>
        <end position="148"/>
    </location>
</feature>
<feature type="domain" description="Plastocyanin-like">
    <location>
        <begin position="21"/>
        <end position="148"/>
    </location>
</feature>
<feature type="binding site" evidence="1">
    <location>
        <position position="66"/>
    </location>
    <ligand>
        <name>Cu cation</name>
        <dbReference type="ChEBI" id="CHEBI:23378"/>
    </ligand>
</feature>
<feature type="binding site" evidence="1">
    <location>
        <position position="132"/>
    </location>
    <ligand>
        <name>Cu cation</name>
        <dbReference type="ChEBI" id="CHEBI:23378"/>
    </ligand>
</feature>
<feature type="binding site" evidence="1">
    <location>
        <position position="137"/>
    </location>
    <ligand>
        <name>Cu cation</name>
        <dbReference type="ChEBI" id="CHEBI:23378"/>
    </ligand>
</feature>
<feature type="binding site">
    <location>
        <position position="141"/>
    </location>
    <ligand>
        <name>Cu cation</name>
        <dbReference type="ChEBI" id="CHEBI:23378"/>
    </ligand>
</feature>
<feature type="disulfide bond">
    <location>
        <begin position="23"/>
        <end position="46"/>
    </location>
</feature>
<feature type="strand" evidence="8">
    <location>
        <begin position="24"/>
        <end position="29"/>
    </location>
</feature>
<feature type="strand" evidence="9">
    <location>
        <begin position="31"/>
        <end position="33"/>
    </location>
</feature>
<feature type="strand" evidence="4">
    <location>
        <begin position="34"/>
        <end position="36"/>
    </location>
</feature>
<feature type="strand" evidence="8">
    <location>
        <begin position="38"/>
        <end position="43"/>
    </location>
</feature>
<feature type="strand" evidence="8">
    <location>
        <begin position="47"/>
        <end position="54"/>
    </location>
</feature>
<feature type="strand" evidence="10">
    <location>
        <begin position="57"/>
        <end position="59"/>
    </location>
</feature>
<feature type="helix" evidence="8">
    <location>
        <begin position="61"/>
        <end position="64"/>
    </location>
</feature>
<feature type="strand" evidence="8">
    <location>
        <begin position="69"/>
        <end position="72"/>
    </location>
</feature>
<feature type="turn" evidence="8">
    <location>
        <begin position="73"/>
        <end position="75"/>
    </location>
</feature>
<feature type="helix" evidence="8">
    <location>
        <begin position="76"/>
        <end position="86"/>
    </location>
</feature>
<feature type="helix" evidence="8">
    <location>
        <begin position="88"/>
        <end position="90"/>
    </location>
</feature>
<feature type="strand" evidence="5">
    <location>
        <begin position="101"/>
        <end position="103"/>
    </location>
</feature>
<feature type="strand" evidence="8">
    <location>
        <begin position="112"/>
        <end position="118"/>
    </location>
</feature>
<feature type="helix" evidence="8">
    <location>
        <begin position="119"/>
        <end position="121"/>
    </location>
</feature>
<feature type="strand" evidence="7">
    <location>
        <begin position="124"/>
        <end position="126"/>
    </location>
</feature>
<feature type="strand" evidence="8">
    <location>
        <begin position="128"/>
        <end position="131"/>
    </location>
</feature>
<feature type="strand" evidence="6">
    <location>
        <begin position="133"/>
        <end position="135"/>
    </location>
</feature>
<feature type="helix" evidence="10">
    <location>
        <begin position="137"/>
        <end position="139"/>
    </location>
</feature>
<feature type="strand" evidence="8">
    <location>
        <begin position="142"/>
        <end position="148"/>
    </location>
</feature>
<gene>
    <name type="primary">azu</name>
    <name type="ordered locus">PA4922</name>
</gene>
<dbReference type="EMBL" id="X07317">
    <property type="protein sequence ID" value="CAA30279.1"/>
    <property type="molecule type" value="Genomic_DNA"/>
</dbReference>
<dbReference type="EMBL" id="M30389">
    <property type="protein sequence ID" value="AAA25730.1"/>
    <property type="molecule type" value="Genomic_DNA"/>
</dbReference>
<dbReference type="EMBL" id="AE004091">
    <property type="protein sequence ID" value="AAG08307.1"/>
    <property type="molecule type" value="Genomic_DNA"/>
</dbReference>
<dbReference type="PIR" id="JQ0644">
    <property type="entry name" value="AZPSCA"/>
</dbReference>
<dbReference type="RefSeq" id="NP_253609.1">
    <property type="nucleotide sequence ID" value="NC_002516.2"/>
</dbReference>
<dbReference type="RefSeq" id="WP_003095591.1">
    <property type="nucleotide sequence ID" value="NZ_QZGE01000002.1"/>
</dbReference>
<dbReference type="PDB" id="1AG0">
    <property type="method" value="X-ray"/>
    <property type="resolution" value="2.40 A"/>
    <property type="chains" value="A/B=20-148"/>
</dbReference>
<dbReference type="PDB" id="1AZN">
    <property type="method" value="X-ray"/>
    <property type="resolution" value="2.60 A"/>
    <property type="chains" value="A/B/C/D=21-148"/>
</dbReference>
<dbReference type="PDB" id="1AZR">
    <property type="method" value="X-ray"/>
    <property type="resolution" value="2.40 A"/>
    <property type="chains" value="A/B/C/D=21-148"/>
</dbReference>
<dbReference type="PDB" id="1AZU">
    <property type="method" value="X-ray"/>
    <property type="resolution" value="2.70 A"/>
    <property type="chains" value="A=21-148"/>
</dbReference>
<dbReference type="PDB" id="1BEX">
    <property type="method" value="X-ray"/>
    <property type="resolution" value="2.30 A"/>
    <property type="chains" value="A/B=21-148"/>
</dbReference>
<dbReference type="PDB" id="1CC3">
    <property type="method" value="X-ray"/>
    <property type="resolution" value="1.65 A"/>
    <property type="chains" value="A/B=21-148"/>
</dbReference>
<dbReference type="PDB" id="1E5Y">
    <property type="method" value="X-ray"/>
    <property type="resolution" value="2.00 A"/>
    <property type="chains" value="A/B/C/D=21-148"/>
</dbReference>
<dbReference type="PDB" id="1E5Z">
    <property type="method" value="X-ray"/>
    <property type="resolution" value="2.00 A"/>
    <property type="chains" value="A/B/C/D=21-148"/>
</dbReference>
<dbReference type="PDB" id="1E65">
    <property type="method" value="X-ray"/>
    <property type="resolution" value="1.85 A"/>
    <property type="chains" value="A/B/C/D=21-148"/>
</dbReference>
<dbReference type="PDB" id="1E67">
    <property type="method" value="X-ray"/>
    <property type="resolution" value="2.14 A"/>
    <property type="chains" value="A/B/C/D=21-148"/>
</dbReference>
<dbReference type="PDB" id="1ETJ">
    <property type="method" value="X-ray"/>
    <property type="resolution" value="2.30 A"/>
    <property type="chains" value="A/B/C/D=21-148"/>
</dbReference>
<dbReference type="PDB" id="1EZL">
    <property type="method" value="X-ray"/>
    <property type="resolution" value="2.00 A"/>
    <property type="chains" value="A/B/C/D=21-148"/>
</dbReference>
<dbReference type="PDB" id="1GR7">
    <property type="method" value="X-ray"/>
    <property type="resolution" value="1.80 A"/>
    <property type="chains" value="A/B/C/D=21-148"/>
</dbReference>
<dbReference type="PDB" id="1I53">
    <property type="method" value="X-ray"/>
    <property type="resolution" value="1.80 A"/>
    <property type="chains" value="A/B=21-148"/>
</dbReference>
<dbReference type="PDB" id="1ILS">
    <property type="method" value="X-ray"/>
    <property type="resolution" value="2.20 A"/>
    <property type="chains" value="A/B/C/D=21-148"/>
</dbReference>
<dbReference type="PDB" id="1ILU">
    <property type="method" value="X-ray"/>
    <property type="resolution" value="2.30 A"/>
    <property type="chains" value="A/B/C/D/E/F/G/H/I/K/L/M=21-148"/>
</dbReference>
<dbReference type="PDB" id="1JVL">
    <property type="method" value="X-ray"/>
    <property type="resolution" value="2.00 A"/>
    <property type="chains" value="A/B=21-148"/>
</dbReference>
<dbReference type="PDB" id="1JVO">
    <property type="method" value="X-ray"/>
    <property type="resolution" value="2.75 A"/>
    <property type="chains" value="A/B/C/D/E/F/G/H/I/J/K/L=21-148"/>
</dbReference>
<dbReference type="PDB" id="1JZE">
    <property type="method" value="X-ray"/>
    <property type="resolution" value="1.60 A"/>
    <property type="chains" value="A=21-148"/>
</dbReference>
<dbReference type="PDB" id="1JZF">
    <property type="method" value="X-ray"/>
    <property type="resolution" value="1.50 A"/>
    <property type="chains" value="A=21-148"/>
</dbReference>
<dbReference type="PDB" id="1JZG">
    <property type="method" value="X-ray"/>
    <property type="resolution" value="1.40 A"/>
    <property type="chains" value="A=21-148"/>
</dbReference>
<dbReference type="PDB" id="1JZH">
    <property type="method" value="X-ray"/>
    <property type="resolution" value="1.70 A"/>
    <property type="chains" value="A=21-148"/>
</dbReference>
<dbReference type="PDB" id="1JZI">
    <property type="method" value="X-ray"/>
    <property type="resolution" value="1.62 A"/>
    <property type="chains" value="A/B=21-148"/>
</dbReference>
<dbReference type="PDB" id="1JZJ">
    <property type="method" value="X-ray"/>
    <property type="resolution" value="1.80 A"/>
    <property type="chains" value="A/B=21-148"/>
</dbReference>
<dbReference type="PDB" id="1NZR">
    <property type="method" value="X-ray"/>
    <property type="resolution" value="2.20 A"/>
    <property type="chains" value="A/B/C/D=21-148"/>
</dbReference>
<dbReference type="PDB" id="1R1C">
    <property type="method" value="X-ray"/>
    <property type="resolution" value="1.90 A"/>
    <property type="chains" value="A/B/C/D=21-148"/>
</dbReference>
<dbReference type="PDB" id="1VLX">
    <property type="method" value="X-ray"/>
    <property type="resolution" value="1.90 A"/>
    <property type="chains" value="A/B/C/D=21-148"/>
</dbReference>
<dbReference type="PDB" id="1XB3">
    <property type="method" value="X-ray"/>
    <property type="resolution" value="1.50 A"/>
    <property type="chains" value="A/B=21-148"/>
</dbReference>
<dbReference type="PDB" id="1XB6">
    <property type="method" value="X-ray"/>
    <property type="resolution" value="1.82 A"/>
    <property type="chains" value="A/B=21-148"/>
</dbReference>
<dbReference type="PDB" id="1XB8">
    <property type="method" value="X-ray"/>
    <property type="resolution" value="2.00 A"/>
    <property type="chains" value="A/C=21-148"/>
</dbReference>
<dbReference type="PDB" id="2AZU">
    <property type="method" value="X-ray"/>
    <property type="resolution" value="1.90 A"/>
    <property type="chains" value="A/B/C/D=21-148"/>
</dbReference>
<dbReference type="PDB" id="2FNW">
    <property type="method" value="X-ray"/>
    <property type="resolution" value="1.40 A"/>
    <property type="chains" value="A/B=21-148"/>
</dbReference>
<dbReference type="PDB" id="2FT6">
    <property type="method" value="X-ray"/>
    <property type="resolution" value="1.25 A"/>
    <property type="chains" value="A=21-148"/>
</dbReference>
<dbReference type="PDB" id="2FT7">
    <property type="method" value="X-ray"/>
    <property type="resolution" value="1.40 A"/>
    <property type="chains" value="A=21-148"/>
</dbReference>
<dbReference type="PDB" id="2FT8">
    <property type="method" value="X-ray"/>
    <property type="resolution" value="1.55 A"/>
    <property type="chains" value="A=21-148"/>
</dbReference>
<dbReference type="PDB" id="2FTA">
    <property type="method" value="X-ray"/>
    <property type="resolution" value="1.61 A"/>
    <property type="chains" value="A/B/C/D=21-148"/>
</dbReference>
<dbReference type="PDB" id="2GHZ">
    <property type="method" value="X-ray"/>
    <property type="resolution" value="1.60 A"/>
    <property type="chains" value="A/B=21-148"/>
</dbReference>
<dbReference type="PDB" id="2GI0">
    <property type="method" value="X-ray"/>
    <property type="resolution" value="1.70 A"/>
    <property type="chains" value="A/B=21-148"/>
</dbReference>
<dbReference type="PDB" id="2HX7">
    <property type="method" value="X-ray"/>
    <property type="resolution" value="1.55 A"/>
    <property type="chains" value="A/B=21-148"/>
</dbReference>
<dbReference type="PDB" id="2HX8">
    <property type="method" value="X-ray"/>
    <property type="resolution" value="1.60 A"/>
    <property type="chains" value="A/B=21-148"/>
</dbReference>
<dbReference type="PDB" id="2HX9">
    <property type="method" value="X-ray"/>
    <property type="resolution" value="1.70 A"/>
    <property type="chains" value="A/B=21-148"/>
</dbReference>
<dbReference type="PDB" id="2HXA">
    <property type="method" value="X-ray"/>
    <property type="resolution" value="2.21 A"/>
    <property type="chains" value="A/B=21-148"/>
</dbReference>
<dbReference type="PDB" id="2I7O">
    <property type="method" value="X-ray"/>
    <property type="resolution" value="1.50 A"/>
    <property type="chains" value="A=21-148"/>
</dbReference>
<dbReference type="PDB" id="2I7S">
    <property type="method" value="X-ray"/>
    <property type="resolution" value="1.35 A"/>
    <property type="chains" value="A/B/C/D=21-148"/>
</dbReference>
<dbReference type="PDB" id="2IDF">
    <property type="method" value="X-ray"/>
    <property type="resolution" value="2.25 A"/>
    <property type="chains" value="A/B=21-148"/>
</dbReference>
<dbReference type="PDB" id="2IWE">
    <property type="method" value="X-ray"/>
    <property type="resolution" value="2.83 A"/>
    <property type="chains" value="A/D/G/J=21-148"/>
</dbReference>
<dbReference type="PDB" id="2OJ1">
    <property type="method" value="X-ray"/>
    <property type="resolution" value="2.30 A"/>
    <property type="chains" value="A/B=21-148"/>
</dbReference>
<dbReference type="PDB" id="2TSA">
    <property type="method" value="X-ray"/>
    <property type="resolution" value="2.20 A"/>
    <property type="chains" value="A/B/C/D=21-148"/>
</dbReference>
<dbReference type="PDB" id="2TSB">
    <property type="method" value="X-ray"/>
    <property type="resolution" value="2.30 A"/>
    <property type="chains" value="A/B/C/D=21-148"/>
</dbReference>
<dbReference type="PDB" id="2XV0">
    <property type="method" value="X-ray"/>
    <property type="resolution" value="1.60 A"/>
    <property type="chains" value="A=21-148"/>
</dbReference>
<dbReference type="PDB" id="2XV2">
    <property type="method" value="X-ray"/>
    <property type="resolution" value="1.60 A"/>
    <property type="chains" value="A=21-148"/>
</dbReference>
<dbReference type="PDB" id="2XV3">
    <property type="method" value="X-ray"/>
    <property type="resolution" value="2.30 A"/>
    <property type="chains" value="A/B=21-148"/>
</dbReference>
<dbReference type="PDB" id="3AZU">
    <property type="method" value="X-ray"/>
    <property type="resolution" value="2.10 A"/>
    <property type="chains" value="A/B/C/D=21-148"/>
</dbReference>
<dbReference type="PDB" id="3FPY">
    <property type="method" value="X-ray"/>
    <property type="resolution" value="2.10 A"/>
    <property type="chains" value="A=21-148"/>
</dbReference>
<dbReference type="PDB" id="3FQ1">
    <property type="method" value="X-ray"/>
    <property type="resolution" value="1.90 A"/>
    <property type="chains" value="A=21-148"/>
</dbReference>
<dbReference type="PDB" id="3FQ2">
    <property type="method" value="X-ray"/>
    <property type="resolution" value="1.91 A"/>
    <property type="chains" value="A=21-148"/>
</dbReference>
<dbReference type="PDB" id="3FQY">
    <property type="method" value="X-ray"/>
    <property type="resolution" value="1.90 A"/>
    <property type="chains" value="A=21-148"/>
</dbReference>
<dbReference type="PDB" id="3FS9">
    <property type="method" value="X-ray"/>
    <property type="resolution" value="1.05 A"/>
    <property type="chains" value="A=21-148"/>
</dbReference>
<dbReference type="PDB" id="3FSA">
    <property type="method" value="X-ray"/>
    <property type="resolution" value="0.98 A"/>
    <property type="chains" value="A=21-148"/>
</dbReference>
<dbReference type="PDB" id="3FSV">
    <property type="method" value="X-ray"/>
    <property type="resolution" value="2.30 A"/>
    <property type="chains" value="A=21-148"/>
</dbReference>
<dbReference type="PDB" id="3FSW">
    <property type="method" value="X-ray"/>
    <property type="resolution" value="2.00 A"/>
    <property type="chains" value="A/B/C/D=21-148"/>
</dbReference>
<dbReference type="PDB" id="3FSZ">
    <property type="method" value="X-ray"/>
    <property type="resolution" value="2.00 A"/>
    <property type="chains" value="A/B=21-148"/>
</dbReference>
<dbReference type="PDB" id="3FT0">
    <property type="method" value="X-ray"/>
    <property type="resolution" value="1.80 A"/>
    <property type="chains" value="A/B=21-148"/>
</dbReference>
<dbReference type="PDB" id="3IBO">
    <property type="method" value="X-ray"/>
    <property type="resolution" value="1.45 A"/>
    <property type="chains" value="A/B/C/D=21-148"/>
</dbReference>
<dbReference type="PDB" id="3IN0">
    <property type="method" value="X-ray"/>
    <property type="resolution" value="2.35 A"/>
    <property type="chains" value="A/B/C/D=21-148"/>
</dbReference>
<dbReference type="PDB" id="3IN2">
    <property type="method" value="X-ray"/>
    <property type="resolution" value="2.60 A"/>
    <property type="chains" value="A=21-148"/>
</dbReference>
<dbReference type="PDB" id="3JT2">
    <property type="method" value="X-ray"/>
    <property type="resolution" value="2.10 A"/>
    <property type="chains" value="A/B=21-148"/>
</dbReference>
<dbReference type="PDB" id="3JTB">
    <property type="method" value="X-ray"/>
    <property type="resolution" value="1.80 A"/>
    <property type="chains" value="A/B/C/D=21-148"/>
</dbReference>
<dbReference type="PDB" id="3N2J">
    <property type="method" value="X-ray"/>
    <property type="resolution" value="1.35 A"/>
    <property type="chains" value="A/B/C/D/E/F/G/H/I/J/K/L=21-148"/>
</dbReference>
<dbReference type="PDB" id="3NP3">
    <property type="method" value="X-ray"/>
    <property type="resolution" value="2.10 A"/>
    <property type="chains" value="A=21-148"/>
</dbReference>
<dbReference type="PDB" id="3NP4">
    <property type="method" value="X-ray"/>
    <property type="resolution" value="2.25 A"/>
    <property type="chains" value="A=21-148"/>
</dbReference>
<dbReference type="PDB" id="3OQR">
    <property type="method" value="X-ray"/>
    <property type="resolution" value="2.40 A"/>
    <property type="chains" value="A=21-148"/>
</dbReference>
<dbReference type="PDB" id="3U25">
    <property type="method" value="X-ray"/>
    <property type="resolution" value="1.18 A"/>
    <property type="chains" value="A/B=22-148"/>
</dbReference>
<dbReference type="PDB" id="3UGE">
    <property type="method" value="X-ray"/>
    <property type="resolution" value="1.70 A"/>
    <property type="chains" value="A/B/C/D=21-148"/>
</dbReference>
<dbReference type="PDB" id="4AZU">
    <property type="method" value="X-ray"/>
    <property type="resolution" value="1.90 A"/>
    <property type="chains" value="A/B/C/D=21-148"/>
</dbReference>
<dbReference type="PDB" id="4BWW">
    <property type="method" value="X-ray"/>
    <property type="resolution" value="1.48 A"/>
    <property type="chains" value="A/B/C/D=21-148"/>
</dbReference>
<dbReference type="PDB" id="4HHG">
    <property type="method" value="X-ray"/>
    <property type="resolution" value="1.60 A"/>
    <property type="chains" value="A=21-148"/>
</dbReference>
<dbReference type="PDB" id="4HHW">
    <property type="method" value="X-ray"/>
    <property type="resolution" value="2.00 A"/>
    <property type="chains" value="A/B=21-148"/>
</dbReference>
<dbReference type="PDB" id="4HIP">
    <property type="method" value="X-ray"/>
    <property type="resolution" value="1.90 A"/>
    <property type="chains" value="A/B=21-148"/>
</dbReference>
<dbReference type="PDB" id="4HZ1">
    <property type="method" value="X-ray"/>
    <property type="resolution" value="2.20 A"/>
    <property type="chains" value="A/B/C/D=21-148"/>
</dbReference>
<dbReference type="PDB" id="4JKN">
    <property type="method" value="X-ray"/>
    <property type="resolution" value="1.54 A"/>
    <property type="chains" value="A/B/C/D=21-148"/>
</dbReference>
<dbReference type="PDB" id="4K9J">
    <property type="method" value="X-ray"/>
    <property type="resolution" value="1.70 A"/>
    <property type="chains" value="A=21-148"/>
</dbReference>
<dbReference type="PDB" id="4KO5">
    <property type="method" value="X-ray"/>
    <property type="resolution" value="1.79 A"/>
    <property type="chains" value="A/B=21-148"/>
</dbReference>
<dbReference type="PDB" id="4KO6">
    <property type="method" value="X-ray"/>
    <property type="resolution" value="1.74 A"/>
    <property type="chains" value="A/B/C/D=21-148"/>
</dbReference>
<dbReference type="PDB" id="4KO7">
    <property type="method" value="X-ray"/>
    <property type="resolution" value="2.07 A"/>
    <property type="chains" value="A/B/C/D=21-148"/>
</dbReference>
<dbReference type="PDB" id="4KO9">
    <property type="method" value="X-ray"/>
    <property type="resolution" value="2.05 A"/>
    <property type="chains" value="A/B/C/D=21-148"/>
</dbReference>
<dbReference type="PDB" id="4KOB">
    <property type="method" value="X-ray"/>
    <property type="resolution" value="1.87 A"/>
    <property type="chains" value="A/B/C/D=21-148"/>
</dbReference>
<dbReference type="PDB" id="4KOC">
    <property type="method" value="X-ray"/>
    <property type="resolution" value="1.46 A"/>
    <property type="chains" value="A=21-148"/>
</dbReference>
<dbReference type="PDB" id="4MFH">
    <property type="method" value="X-ray"/>
    <property type="resolution" value="1.54 A"/>
    <property type="chains" value="A/B/C=21-148"/>
</dbReference>
<dbReference type="PDB" id="4QKT">
    <property type="method" value="X-ray"/>
    <property type="resolution" value="1.64 A"/>
    <property type="chains" value="A/B=21-148"/>
</dbReference>
<dbReference type="PDB" id="4QLW">
    <property type="method" value="X-ray"/>
    <property type="resolution" value="2.00 A"/>
    <property type="chains" value="A/B/C/D=21-148"/>
</dbReference>
<dbReference type="PDB" id="4WKX">
    <property type="method" value="X-ray"/>
    <property type="resolution" value="1.94 A"/>
    <property type="chains" value="A/B=21-148"/>
</dbReference>
<dbReference type="PDB" id="5AZU">
    <property type="method" value="X-ray"/>
    <property type="resolution" value="1.90 A"/>
    <property type="chains" value="A/B/C/D=21-148"/>
</dbReference>
<dbReference type="PDB" id="5I26">
    <property type="method" value="X-ray"/>
    <property type="resolution" value="1.89 A"/>
    <property type="chains" value="A/B/C/D=21-148"/>
</dbReference>
<dbReference type="PDB" id="5I28">
    <property type="method" value="X-ray"/>
    <property type="resolution" value="1.95 A"/>
    <property type="chains" value="A/B/C/D/E/F/G/H/I/J/K/L/M/N/O/P=21-148"/>
</dbReference>
<dbReference type="PDB" id="5SYD">
    <property type="method" value="X-ray"/>
    <property type="resolution" value="2.40 A"/>
    <property type="chains" value="A/B=63-148"/>
</dbReference>
<dbReference type="PDB" id="5YT7">
    <property type="method" value="X-ray"/>
    <property type="resolution" value="1.66 A"/>
    <property type="chains" value="A/B/C/D=21-134"/>
</dbReference>
<dbReference type="PDB" id="6GYI">
    <property type="method" value="X-ray"/>
    <property type="resolution" value="1.60 A"/>
    <property type="chains" value="A/B/C/D=21-148"/>
</dbReference>
<dbReference type="PDB" id="6IAV">
    <property type="method" value="X-ray"/>
    <property type="resolution" value="2.00 A"/>
    <property type="chains" value="A/B/C/D=22-148"/>
</dbReference>
<dbReference type="PDB" id="6MJR">
    <property type="method" value="X-ray"/>
    <property type="resolution" value="2.01 A"/>
    <property type="chains" value="A/B/C/D=22-148"/>
</dbReference>
<dbReference type="PDB" id="6MJS">
    <property type="method" value="X-ray"/>
    <property type="resolution" value="1.85 A"/>
    <property type="chains" value="A/B/C/D=22-148"/>
</dbReference>
<dbReference type="PDB" id="6MJT">
    <property type="method" value="X-ray"/>
    <property type="resolution" value="1.89 A"/>
    <property type="chains" value="A/B=22-148"/>
</dbReference>
<dbReference type="PDB" id="7TC5">
    <property type="method" value="X-ray"/>
    <property type="resolution" value="1.45 A"/>
    <property type="chains" value="A/B=21-148"/>
</dbReference>
<dbReference type="PDB" id="7TC6">
    <property type="method" value="X-ray"/>
    <property type="resolution" value="1.85 A"/>
    <property type="chains" value="A/B=22-148"/>
</dbReference>
<dbReference type="PDB" id="7TNC">
    <property type="method" value="X-ray"/>
    <property type="resolution" value="1.47 A"/>
    <property type="chains" value="A=21-148"/>
</dbReference>
<dbReference type="PDB" id="7U2F">
    <property type="method" value="X-ray"/>
    <property type="resolution" value="2.20 A"/>
    <property type="chains" value="A=21-148"/>
</dbReference>
<dbReference type="PDB" id="7YGI">
    <property type="method" value="X-ray"/>
    <property type="resolution" value="2.10 A"/>
    <property type="chains" value="C/D=23-145"/>
</dbReference>
<dbReference type="PDB" id="8F5K">
    <property type="method" value="X-ray"/>
    <property type="resolution" value="1.25 A"/>
    <property type="chains" value="A/B/C/D=1-148"/>
</dbReference>
<dbReference type="PDB" id="8F5L">
    <property type="method" value="X-ray"/>
    <property type="resolution" value="1.15 A"/>
    <property type="chains" value="A/B=1-148"/>
</dbReference>
<dbReference type="PDBsum" id="1AG0"/>
<dbReference type="PDBsum" id="1AZN"/>
<dbReference type="PDBsum" id="1AZR"/>
<dbReference type="PDBsum" id="1AZU"/>
<dbReference type="PDBsum" id="1BEX"/>
<dbReference type="PDBsum" id="1CC3"/>
<dbReference type="PDBsum" id="1E5Y"/>
<dbReference type="PDBsum" id="1E5Z"/>
<dbReference type="PDBsum" id="1E65"/>
<dbReference type="PDBsum" id="1E67"/>
<dbReference type="PDBsum" id="1ETJ"/>
<dbReference type="PDBsum" id="1EZL"/>
<dbReference type="PDBsum" id="1GR7"/>
<dbReference type="PDBsum" id="1I53"/>
<dbReference type="PDBsum" id="1ILS"/>
<dbReference type="PDBsum" id="1ILU"/>
<dbReference type="PDBsum" id="1JVL"/>
<dbReference type="PDBsum" id="1JVO"/>
<dbReference type="PDBsum" id="1JZE"/>
<dbReference type="PDBsum" id="1JZF"/>
<dbReference type="PDBsum" id="1JZG"/>
<dbReference type="PDBsum" id="1JZH"/>
<dbReference type="PDBsum" id="1JZI"/>
<dbReference type="PDBsum" id="1JZJ"/>
<dbReference type="PDBsum" id="1NZR"/>
<dbReference type="PDBsum" id="1R1C"/>
<dbReference type="PDBsum" id="1VLX"/>
<dbReference type="PDBsum" id="1XB3"/>
<dbReference type="PDBsum" id="1XB6"/>
<dbReference type="PDBsum" id="1XB8"/>
<dbReference type="PDBsum" id="2AZU"/>
<dbReference type="PDBsum" id="2FNW"/>
<dbReference type="PDBsum" id="2FT6"/>
<dbReference type="PDBsum" id="2FT7"/>
<dbReference type="PDBsum" id="2FT8"/>
<dbReference type="PDBsum" id="2FTA"/>
<dbReference type="PDBsum" id="2GHZ"/>
<dbReference type="PDBsum" id="2GI0"/>
<dbReference type="PDBsum" id="2HX7"/>
<dbReference type="PDBsum" id="2HX8"/>
<dbReference type="PDBsum" id="2HX9"/>
<dbReference type="PDBsum" id="2HXA"/>
<dbReference type="PDBsum" id="2I7O"/>
<dbReference type="PDBsum" id="2I7S"/>
<dbReference type="PDBsum" id="2IDF"/>
<dbReference type="PDBsum" id="2IWE"/>
<dbReference type="PDBsum" id="2OJ1"/>
<dbReference type="PDBsum" id="2TSA"/>
<dbReference type="PDBsum" id="2TSB"/>
<dbReference type="PDBsum" id="2XV0"/>
<dbReference type="PDBsum" id="2XV2"/>
<dbReference type="PDBsum" id="2XV3"/>
<dbReference type="PDBsum" id="3AZU"/>
<dbReference type="PDBsum" id="3FPY"/>
<dbReference type="PDBsum" id="3FQ1"/>
<dbReference type="PDBsum" id="3FQ2"/>
<dbReference type="PDBsum" id="3FQY"/>
<dbReference type="PDBsum" id="3FS9"/>
<dbReference type="PDBsum" id="3FSA"/>
<dbReference type="PDBsum" id="3FSV"/>
<dbReference type="PDBsum" id="3FSW"/>
<dbReference type="PDBsum" id="3FSZ"/>
<dbReference type="PDBsum" id="3FT0"/>
<dbReference type="PDBsum" id="3IBO"/>
<dbReference type="PDBsum" id="3IN0"/>
<dbReference type="PDBsum" id="3IN2"/>
<dbReference type="PDBsum" id="3JT2"/>
<dbReference type="PDBsum" id="3JTB"/>
<dbReference type="PDBsum" id="3N2J"/>
<dbReference type="PDBsum" id="3NP3"/>
<dbReference type="PDBsum" id="3NP4"/>
<dbReference type="PDBsum" id="3OQR"/>
<dbReference type="PDBsum" id="3U25"/>
<dbReference type="PDBsum" id="3UGE"/>
<dbReference type="PDBsum" id="4AZU"/>
<dbReference type="PDBsum" id="4BWW"/>
<dbReference type="PDBsum" id="4HHG"/>
<dbReference type="PDBsum" id="4HHW"/>
<dbReference type="PDBsum" id="4HIP"/>
<dbReference type="PDBsum" id="4HZ1"/>
<dbReference type="PDBsum" id="4JKN"/>
<dbReference type="PDBsum" id="4K9J"/>
<dbReference type="PDBsum" id="4KO5"/>
<dbReference type="PDBsum" id="4KO6"/>
<dbReference type="PDBsum" id="4KO7"/>
<dbReference type="PDBsum" id="4KO9"/>
<dbReference type="PDBsum" id="4KOB"/>
<dbReference type="PDBsum" id="4KOC"/>
<dbReference type="PDBsum" id="4MFH"/>
<dbReference type="PDBsum" id="4QKT"/>
<dbReference type="PDBsum" id="4QLW"/>
<dbReference type="PDBsum" id="4WKX"/>
<dbReference type="PDBsum" id="5AZU"/>
<dbReference type="PDBsum" id="5I26"/>
<dbReference type="PDBsum" id="5I28"/>
<dbReference type="PDBsum" id="5SYD"/>
<dbReference type="PDBsum" id="5YT7"/>
<dbReference type="PDBsum" id="6GYI"/>
<dbReference type="PDBsum" id="6IAV"/>
<dbReference type="PDBsum" id="6MJR"/>
<dbReference type="PDBsum" id="6MJS"/>
<dbReference type="PDBsum" id="6MJT"/>
<dbReference type="PDBsum" id="7TC5"/>
<dbReference type="PDBsum" id="7TC6"/>
<dbReference type="PDBsum" id="7TNC"/>
<dbReference type="PDBsum" id="7U2F"/>
<dbReference type="PDBsum" id="7YGI"/>
<dbReference type="PDBsum" id="8F5K"/>
<dbReference type="PDBsum" id="8F5L"/>
<dbReference type="BMRB" id="P00282"/>
<dbReference type="PCDDB" id="P00282"/>
<dbReference type="SMR" id="P00282"/>
<dbReference type="DIP" id="DIP-48787N"/>
<dbReference type="IntAct" id="P00282">
    <property type="interactions" value="6"/>
</dbReference>
<dbReference type="MINT" id="P00282"/>
<dbReference type="STRING" id="208964.PA4922"/>
<dbReference type="DrugBank" id="DB06968">
    <property type="generic name" value="1,1'-HEXANE-1,6-DIYLBIS(1H-IMIDAZOLE)"/>
</dbReference>
<dbReference type="DrugBank" id="DB02586">
    <property type="generic name" value="4,7-Dimethyl-[1,10]Phenanthroline"/>
</dbReference>
<dbReference type="DrugBank" id="DB04085">
    <property type="generic name" value="Bis(N-maleimidomethyl)ether"/>
</dbReference>
<dbReference type="DrugBank" id="DB03492">
    <property type="generic name" value="lambda-bis(2,2'-bipyridine)imidazole osmium (II)"/>
</dbReference>
<dbReference type="DrugBank" id="DB03871">
    <property type="generic name" value="lambda-bis(2,2'-bipyridine)imidazole ruthenium (II)"/>
</dbReference>
<dbReference type="DrugBank" id="DB01915">
    <property type="generic name" value="S-Hydroxycysteine"/>
</dbReference>
<dbReference type="DrugBank" id="DB04231">
    <property type="generic name" value="Tetra(imidazole)diaquacopper (I)"/>
</dbReference>
<dbReference type="DrugBank" id="DB03840">
    <property type="generic name" value="Tetra(Imidazole)Diaquacopper (Ii)"/>
</dbReference>
<dbReference type="DrugBank" id="DB04100">
    <property type="generic name" value="Tricarbonyl(1,10-phenanthroline)rhenium(1+)"/>
</dbReference>
<dbReference type="DrugBank" id="DB03570">
    <property type="generic name" value="Tris-Hydroxymethyl-Methyl-Ammonium"/>
</dbReference>
<dbReference type="PaxDb" id="208964-PA4922"/>
<dbReference type="DNASU" id="878046"/>
<dbReference type="GeneID" id="878046"/>
<dbReference type="KEGG" id="pae:PA4922"/>
<dbReference type="PATRIC" id="fig|208964.12.peg.5155"/>
<dbReference type="PseudoCAP" id="PA4922"/>
<dbReference type="HOGENOM" id="CLU_112845_1_0_6"/>
<dbReference type="InParanoid" id="P00282"/>
<dbReference type="OrthoDB" id="9814063at2"/>
<dbReference type="PhylomeDB" id="P00282"/>
<dbReference type="BioCyc" id="PAER208964:G1FZ6-5036-MONOMER"/>
<dbReference type="SABIO-RK" id="P00282"/>
<dbReference type="EvolutionaryTrace" id="P00282"/>
<dbReference type="Proteomes" id="UP000002438">
    <property type="component" value="Chromosome"/>
</dbReference>
<dbReference type="GO" id="GO:0042597">
    <property type="term" value="C:periplasmic space"/>
    <property type="evidence" value="ECO:0007669"/>
    <property type="project" value="UniProtKB-SubCell"/>
</dbReference>
<dbReference type="GO" id="GO:0005886">
    <property type="term" value="C:plasma membrane"/>
    <property type="evidence" value="ECO:0000318"/>
    <property type="project" value="GO_Central"/>
</dbReference>
<dbReference type="GO" id="GO:0005507">
    <property type="term" value="F:copper ion binding"/>
    <property type="evidence" value="ECO:0000315"/>
    <property type="project" value="PseudoCAP"/>
</dbReference>
<dbReference type="GO" id="GO:0009055">
    <property type="term" value="F:electron transfer activity"/>
    <property type="evidence" value="ECO:0007669"/>
    <property type="project" value="InterPro"/>
</dbReference>
<dbReference type="GO" id="GO:0042802">
    <property type="term" value="F:identical protein binding"/>
    <property type="evidence" value="ECO:0000353"/>
    <property type="project" value="IntAct"/>
</dbReference>
<dbReference type="GO" id="GO:0046914">
    <property type="term" value="F:transition metal ion binding"/>
    <property type="evidence" value="ECO:0000314"/>
    <property type="project" value="PseudoCAP"/>
</dbReference>
<dbReference type="GO" id="GO:0008270">
    <property type="term" value="F:zinc ion binding"/>
    <property type="evidence" value="ECO:0000315"/>
    <property type="project" value="PseudoCAP"/>
</dbReference>
<dbReference type="CDD" id="cd13922">
    <property type="entry name" value="Azurin"/>
    <property type="match status" value="1"/>
</dbReference>
<dbReference type="FunFam" id="2.60.40.420:FF:000040">
    <property type="entry name" value="Azurin"/>
    <property type="match status" value="1"/>
</dbReference>
<dbReference type="Gene3D" id="2.60.40.420">
    <property type="entry name" value="Cupredoxins - blue copper proteins"/>
    <property type="match status" value="1"/>
</dbReference>
<dbReference type="InterPro" id="IPR014068">
    <property type="entry name" value="Azurin"/>
</dbReference>
<dbReference type="InterPro" id="IPR000923">
    <property type="entry name" value="BlueCu_1"/>
</dbReference>
<dbReference type="InterPro" id="IPR028871">
    <property type="entry name" value="BlueCu_1_BS"/>
</dbReference>
<dbReference type="InterPro" id="IPR050845">
    <property type="entry name" value="Cu-binding_ET"/>
</dbReference>
<dbReference type="InterPro" id="IPR008972">
    <property type="entry name" value="Cupredoxin"/>
</dbReference>
<dbReference type="NCBIfam" id="TIGR02695">
    <property type="entry name" value="azurin"/>
    <property type="match status" value="1"/>
</dbReference>
<dbReference type="PANTHER" id="PTHR38439">
    <property type="entry name" value="AURACYANIN-B"/>
    <property type="match status" value="1"/>
</dbReference>
<dbReference type="PANTHER" id="PTHR38439:SF2">
    <property type="entry name" value="OUTER MEMBRANE PROTEIN H.8"/>
    <property type="match status" value="1"/>
</dbReference>
<dbReference type="Pfam" id="PF00127">
    <property type="entry name" value="Copper-bind"/>
    <property type="match status" value="1"/>
</dbReference>
<dbReference type="SUPFAM" id="SSF49503">
    <property type="entry name" value="Cupredoxins"/>
    <property type="match status" value="1"/>
</dbReference>
<dbReference type="PROSITE" id="PS00196">
    <property type="entry name" value="COPPER_BLUE"/>
    <property type="match status" value="1"/>
</dbReference>